<evidence type="ECO:0000269" key="1">
    <source>
    </source>
</evidence>
<evidence type="ECO:0000269" key="2">
    <source>
    </source>
</evidence>
<evidence type="ECO:0000303" key="3">
    <source>
    </source>
</evidence>
<evidence type="ECO:0000303" key="4">
    <source ref="1"/>
</evidence>
<evidence type="ECO:0000305" key="5"/>
<evidence type="ECO:0000312" key="6">
    <source>
        <dbReference type="HGNC" id="HGNC:21314"/>
    </source>
</evidence>
<evidence type="ECO:0007744" key="7">
    <source>
    </source>
</evidence>
<feature type="chain" id="PRO_0000332924" description="COP9 signalosome complex subunit 9">
    <location>
        <begin position="1"/>
        <end position="57"/>
    </location>
</feature>
<feature type="modified residue" description="Phosphothreonine" evidence="7">
    <location>
        <position position="26"/>
    </location>
</feature>
<feature type="splice variant" id="VSP_037073" description="In isoform 2." evidence="4">
    <original>M</original>
    <variation>MWRAPEAALRPEVSLERRGPEM</variation>
    <location>
        <position position="1"/>
    </location>
</feature>
<feature type="splice variant" id="VSP_037074" description="In isoform 2." evidence="4">
    <original>E</original>
    <variation>EVARARRESPS</variation>
    <location>
        <position position="21"/>
    </location>
</feature>
<feature type="splice variant" id="VSP_037075" description="In isoform 2." evidence="4">
    <original>Q</original>
    <variation>HSSGLPRTSQQSSMVPALQRGQSEHGVRGKAAERPVVSEERCELNGREVAALDRAFGSTGHGQGAEALMFTRCREHPLCGTNKATSEGKMGTGRLRNSLRKNQSKWLGSYLEVLRTTRSRREVSEDSTISVSTHWRGKCFKSDETPSVAGGEEGKKTTQPCIDVR</variation>
    <location>
        <position position="57"/>
    </location>
</feature>
<feature type="mutagenesis site" description="Does not abolish interaction with CSN complex. Abolishes interaction with CSN complex; when associated with A-51." evidence="2">
    <original>F</original>
    <variation>A</variation>
    <location>
        <position position="44"/>
    </location>
</feature>
<feature type="mutagenesis site" description="Decreases interaction with CSN complex. Abolishes interaction with CSN complex; when associated with A-44." evidence="2">
    <original>F</original>
    <variation>A</variation>
    <location>
        <position position="51"/>
    </location>
</feature>
<reference key="1">
    <citation type="journal article" date="2003" name="Zhongguo Sheng Wu Hua Xue Yu Fen Zi Sheng Wu Xue Bao">
        <title>Molecular cloning and expression of a novel gene in multiple myeloma cells.</title>
        <authorList>
            <person name="Tang L.-J."/>
            <person name="Hu W.-X."/>
            <person name="He L.-F."/>
            <person name="Tian J.-Y."/>
            <person name="Liu X.-F."/>
            <person name="Tan D.-R."/>
        </authorList>
    </citation>
    <scope>NUCLEOTIDE SEQUENCE [MRNA] (ISOFORMS 1 AND 2)</scope>
</reference>
<reference key="2">
    <citation type="journal article" date="2005" name="Nature">
        <title>Generation and annotation of the DNA sequences of human chromosomes 2 and 4.</title>
        <authorList>
            <person name="Hillier L.W."/>
            <person name="Graves T.A."/>
            <person name="Fulton R.S."/>
            <person name="Fulton L.A."/>
            <person name="Pepin K.H."/>
            <person name="Minx P."/>
            <person name="Wagner-McPherson C."/>
            <person name="Layman D."/>
            <person name="Wylie K."/>
            <person name="Sekhon M."/>
            <person name="Becker M.C."/>
            <person name="Fewell G.A."/>
            <person name="Delehaunty K.D."/>
            <person name="Miner T.L."/>
            <person name="Nash W.E."/>
            <person name="Kremitzki C."/>
            <person name="Oddy L."/>
            <person name="Du H."/>
            <person name="Sun H."/>
            <person name="Bradshaw-Cordum H."/>
            <person name="Ali J."/>
            <person name="Carter J."/>
            <person name="Cordes M."/>
            <person name="Harris A."/>
            <person name="Isak A."/>
            <person name="van Brunt A."/>
            <person name="Nguyen C."/>
            <person name="Du F."/>
            <person name="Courtney L."/>
            <person name="Kalicki J."/>
            <person name="Ozersky P."/>
            <person name="Abbott S."/>
            <person name="Armstrong J."/>
            <person name="Belter E.A."/>
            <person name="Caruso L."/>
            <person name="Cedroni M."/>
            <person name="Cotton M."/>
            <person name="Davidson T."/>
            <person name="Desai A."/>
            <person name="Elliott G."/>
            <person name="Erb T."/>
            <person name="Fronick C."/>
            <person name="Gaige T."/>
            <person name="Haakenson W."/>
            <person name="Haglund K."/>
            <person name="Holmes A."/>
            <person name="Harkins R."/>
            <person name="Kim K."/>
            <person name="Kruchowski S.S."/>
            <person name="Strong C.M."/>
            <person name="Grewal N."/>
            <person name="Goyea E."/>
            <person name="Hou S."/>
            <person name="Levy A."/>
            <person name="Martinka S."/>
            <person name="Mead K."/>
            <person name="McLellan M.D."/>
            <person name="Meyer R."/>
            <person name="Randall-Maher J."/>
            <person name="Tomlinson C."/>
            <person name="Dauphin-Kohlberg S."/>
            <person name="Kozlowicz-Reilly A."/>
            <person name="Shah N."/>
            <person name="Swearengen-Shahid S."/>
            <person name="Snider J."/>
            <person name="Strong J.T."/>
            <person name="Thompson J."/>
            <person name="Yoakum M."/>
            <person name="Leonard S."/>
            <person name="Pearman C."/>
            <person name="Trani L."/>
            <person name="Radionenko M."/>
            <person name="Waligorski J.E."/>
            <person name="Wang C."/>
            <person name="Rock S.M."/>
            <person name="Tin-Wollam A.-M."/>
            <person name="Maupin R."/>
            <person name="Latreille P."/>
            <person name="Wendl M.C."/>
            <person name="Yang S.-P."/>
            <person name="Pohl C."/>
            <person name="Wallis J.W."/>
            <person name="Spieth J."/>
            <person name="Bieri T.A."/>
            <person name="Berkowicz N."/>
            <person name="Nelson J.O."/>
            <person name="Osborne J."/>
            <person name="Ding L."/>
            <person name="Meyer R."/>
            <person name="Sabo A."/>
            <person name="Shotland Y."/>
            <person name="Sinha P."/>
            <person name="Wohldmann P.E."/>
            <person name="Cook L.L."/>
            <person name="Hickenbotham M.T."/>
            <person name="Eldred J."/>
            <person name="Williams D."/>
            <person name="Jones T.A."/>
            <person name="She X."/>
            <person name="Ciccarelli F.D."/>
            <person name="Izaurralde E."/>
            <person name="Taylor J."/>
            <person name="Schmutz J."/>
            <person name="Myers R.M."/>
            <person name="Cox D.R."/>
            <person name="Huang X."/>
            <person name="McPherson J.D."/>
            <person name="Mardis E.R."/>
            <person name="Clifton S.W."/>
            <person name="Warren W.C."/>
            <person name="Chinwalla A.T."/>
            <person name="Eddy S.R."/>
            <person name="Marra M.A."/>
            <person name="Ovcharenko I."/>
            <person name="Furey T.S."/>
            <person name="Miller W."/>
            <person name="Eichler E.E."/>
            <person name="Bork P."/>
            <person name="Suyama M."/>
            <person name="Torrents D."/>
            <person name="Waterston R.H."/>
            <person name="Wilson R.K."/>
        </authorList>
    </citation>
    <scope>NUCLEOTIDE SEQUENCE [LARGE SCALE GENOMIC DNA]</scope>
</reference>
<reference key="3">
    <citation type="submission" date="2005-07" db="EMBL/GenBank/DDBJ databases">
        <authorList>
            <person name="Mural R.J."/>
            <person name="Istrail S."/>
            <person name="Sutton G.G."/>
            <person name="Florea L."/>
            <person name="Halpern A.L."/>
            <person name="Mobarry C.M."/>
            <person name="Lippert R."/>
            <person name="Walenz B."/>
            <person name="Shatkay H."/>
            <person name="Dew I."/>
            <person name="Miller J.R."/>
            <person name="Flanigan M.J."/>
            <person name="Edwards N.J."/>
            <person name="Bolanos R."/>
            <person name="Fasulo D."/>
            <person name="Halldorsson B.V."/>
            <person name="Hannenhalli S."/>
            <person name="Turner R."/>
            <person name="Yooseph S."/>
            <person name="Lu F."/>
            <person name="Nusskern D.R."/>
            <person name="Shue B.C."/>
            <person name="Zheng X.H."/>
            <person name="Zhong F."/>
            <person name="Delcher A.L."/>
            <person name="Huson D.H."/>
            <person name="Kravitz S.A."/>
            <person name="Mouchard L."/>
            <person name="Reinert K."/>
            <person name="Remington K.A."/>
            <person name="Clark A.G."/>
            <person name="Waterman M.S."/>
            <person name="Eichler E.E."/>
            <person name="Adams M.D."/>
            <person name="Hunkapiller M.W."/>
            <person name="Myers E.W."/>
            <person name="Venter J.C."/>
        </authorList>
    </citation>
    <scope>NUCLEOTIDE SEQUENCE [LARGE SCALE GENOMIC DNA]</scope>
</reference>
<reference key="4">
    <citation type="journal article" date="2013" name="PLoS ONE">
        <title>Myeloma overexpressed 2 (Myeov2) regulates L11 subnuclear localization through Nedd8 modification.</title>
        <authorList>
            <person name="Ebina M."/>
            <person name="Tsuruta F."/>
            <person name="Katoh M.C."/>
            <person name="Kigoshi Y."/>
            <person name="Someya A."/>
            <person name="Chiba T."/>
        </authorList>
    </citation>
    <scope>INTERACTION WITH COPS5; CUL1; CUL3 AND RPL11 (ISOFORM 2)</scope>
    <scope>ASSOCIATION WITH THE CSN COMPLEX (ISOFORM 2)</scope>
    <scope>SUBCELLULAR LOCATION (ISOFORM 2)</scope>
    <scope>DOMAIN (ISOFORM 2)</scope>
</reference>
<reference key="5">
    <citation type="journal article" date="2014" name="J. Proteomics">
        <title>An enzyme assisted RP-RPLC approach for in-depth analysis of human liver phosphoproteome.</title>
        <authorList>
            <person name="Bian Y."/>
            <person name="Song C."/>
            <person name="Cheng K."/>
            <person name="Dong M."/>
            <person name="Wang F."/>
            <person name="Huang J."/>
            <person name="Sun D."/>
            <person name="Wang L."/>
            <person name="Ye M."/>
            <person name="Zou H."/>
        </authorList>
    </citation>
    <scope>PHOSPHORYLATION [LARGE SCALE ANALYSIS] AT THR-26</scope>
    <scope>IDENTIFICATION BY MASS SPECTROMETRY [LARGE SCALE ANALYSIS]</scope>
    <source>
        <tissue>Liver</tissue>
    </source>
</reference>
<reference key="6">
    <citation type="journal article" date="2015" name="Cell Rep.">
        <title>CSNAP is a stoichiometric subunit of the COP9 signalosome.</title>
        <authorList>
            <person name="Rozen S."/>
            <person name="Fuezesi-Levi M.G."/>
            <person name="Ben-Nissan G."/>
            <person name="Mizrachi L."/>
            <person name="Gabashvili A."/>
            <person name="Levin Y."/>
            <person name="Ben-Dor S."/>
            <person name="Eisenstein M."/>
            <person name="Sharon M."/>
        </authorList>
    </citation>
    <scope>FUNCTION (ISOFORM 1)</scope>
    <scope>COMPOSITION OF THE CSN COMPLEX (ISOFORM 1)</scope>
    <scope>INTERACTION WITH COPS3; COPS5 AND COPS6 (ISOFORM 1)</scope>
    <scope>SUBCELLULAR LOCATION (ISOFORM 1)</scope>
    <scope>DOMAIN (ISOFORM 1)</scope>
    <scope>IDENTIFICATION BY MASS SPECTROMETRY (ISOFORM 1)</scope>
    <scope>MUTAGENESIS OF PHE-44 AND PHE-51</scope>
</reference>
<proteinExistence type="evidence at protein level"/>
<dbReference type="EMBL" id="AF453951">
    <property type="protein sequence ID" value="AAL41026.1"/>
    <property type="molecule type" value="mRNA"/>
</dbReference>
<dbReference type="EMBL" id="AF487338">
    <property type="protein sequence ID" value="AAL96264.2"/>
    <property type="molecule type" value="mRNA"/>
</dbReference>
<dbReference type="EMBL" id="AC013469">
    <property type="protein sequence ID" value="AAY14738.1"/>
    <property type="molecule type" value="Genomic_DNA"/>
</dbReference>
<dbReference type="EMBL" id="CH471063">
    <property type="protein sequence ID" value="EAW71178.1"/>
    <property type="molecule type" value="Genomic_DNA"/>
</dbReference>
<dbReference type="CCDS" id="CCDS2532.1">
    <molecule id="Q8WXC6-1"/>
</dbReference>
<dbReference type="CCDS" id="CCDS63183.1">
    <molecule id="Q8WXC6-2"/>
</dbReference>
<dbReference type="RefSeq" id="NP_001156896.1">
    <molecule id="Q8WXC6-2"/>
    <property type="nucleotide sequence ID" value="NM_001163424.2"/>
</dbReference>
<dbReference type="RefSeq" id="NP_612209.1">
    <molecule id="Q8WXC6-1"/>
    <property type="nucleotide sequence ID" value="NM_138336.1"/>
</dbReference>
<dbReference type="BioGRID" id="127315">
    <property type="interactions" value="57"/>
</dbReference>
<dbReference type="FunCoup" id="Q8WXC6">
    <property type="interactions" value="1546"/>
</dbReference>
<dbReference type="IntAct" id="Q8WXC6">
    <property type="interactions" value="37"/>
</dbReference>
<dbReference type="STRING" id="9606.ENSP00000304147"/>
<dbReference type="iPTMnet" id="Q8WXC6"/>
<dbReference type="PhosphoSitePlus" id="Q8WXC6"/>
<dbReference type="BioMuta" id="COPS9"/>
<dbReference type="jPOST" id="Q8WXC6"/>
<dbReference type="MassIVE" id="Q8WXC6"/>
<dbReference type="PeptideAtlas" id="Q8WXC6"/>
<dbReference type="ProteomicsDB" id="75006">
    <molecule id="Q8WXC6-2"/>
</dbReference>
<dbReference type="ProteomicsDB" id="75007">
    <molecule id="Q8WXC6-1"/>
</dbReference>
<dbReference type="Pumba" id="Q8WXC6"/>
<dbReference type="Antibodypedia" id="50515">
    <property type="antibodies" value="21 antibodies from 11 providers"/>
</dbReference>
<dbReference type="DNASU" id="150678"/>
<dbReference type="Ensembl" id="ENST00000307266.7">
    <molecule id="Q8WXC6-1"/>
    <property type="protein sequence ID" value="ENSP00000304147.3"/>
    <property type="gene ID" value="ENSG00000172428.11"/>
</dbReference>
<dbReference type="Ensembl" id="ENST00000607357.2">
    <molecule id="Q8WXC6-2"/>
    <property type="protein sequence ID" value="ENSP00000475979.1"/>
    <property type="gene ID" value="ENSG00000172428.11"/>
</dbReference>
<dbReference type="GeneID" id="150678"/>
<dbReference type="KEGG" id="hsa:150678"/>
<dbReference type="MANE-Select" id="ENST00000607357.2">
    <property type="protein sequence ID" value="ENSP00000475979.1"/>
    <property type="RefSeq nucleotide sequence ID" value="NM_001163424.2"/>
    <property type="RefSeq protein sequence ID" value="NP_001156896.1"/>
</dbReference>
<dbReference type="UCSC" id="uc002vyu.1">
    <molecule id="Q8WXC6-2"/>
    <property type="organism name" value="human"/>
</dbReference>
<dbReference type="AGR" id="HGNC:21314"/>
<dbReference type="CTD" id="150678"/>
<dbReference type="GeneCards" id="COPS9"/>
<dbReference type="HGNC" id="HGNC:21314">
    <property type="gene designation" value="COPS9"/>
</dbReference>
<dbReference type="HPA" id="ENSG00000172428">
    <property type="expression patterns" value="Low tissue specificity"/>
</dbReference>
<dbReference type="MIM" id="619349">
    <property type="type" value="gene"/>
</dbReference>
<dbReference type="neXtProt" id="NX_Q8WXC6"/>
<dbReference type="OpenTargets" id="ENSG00000172428"/>
<dbReference type="PharmGKB" id="PA142671302"/>
<dbReference type="VEuPathDB" id="HostDB:ENSG00000172428"/>
<dbReference type="GeneTree" id="ENSGT00390000000076"/>
<dbReference type="HOGENOM" id="CLU_1102500_0_0_1"/>
<dbReference type="InParanoid" id="Q8WXC6"/>
<dbReference type="OMA" id="SNDKHVH"/>
<dbReference type="OrthoDB" id="9972368at2759"/>
<dbReference type="PAN-GO" id="Q8WXC6">
    <property type="GO annotations" value="1 GO annotation based on evolutionary models"/>
</dbReference>
<dbReference type="PhylomeDB" id="Q8WXC6"/>
<dbReference type="TreeFam" id="TF323869"/>
<dbReference type="PathwayCommons" id="Q8WXC6"/>
<dbReference type="SignaLink" id="Q8WXC6"/>
<dbReference type="BioGRID-ORCS" id="150678">
    <property type="hits" value="43 hits in 1152 CRISPR screens"/>
</dbReference>
<dbReference type="GenomeRNAi" id="150678"/>
<dbReference type="Pharos" id="Q8WXC6">
    <property type="development level" value="Tbio"/>
</dbReference>
<dbReference type="PRO" id="PR:Q8WXC6"/>
<dbReference type="Proteomes" id="UP000005640">
    <property type="component" value="Chromosome 2"/>
</dbReference>
<dbReference type="RNAct" id="Q8WXC6">
    <property type="molecule type" value="protein"/>
</dbReference>
<dbReference type="Bgee" id="ENSG00000172428">
    <property type="expression patterns" value="Expressed in upper arm skin and 184 other cell types or tissues"/>
</dbReference>
<dbReference type="ExpressionAtlas" id="Q8WXC6">
    <property type="expression patterns" value="baseline and differential"/>
</dbReference>
<dbReference type="GO" id="GO:0000785">
    <property type="term" value="C:chromatin"/>
    <property type="evidence" value="ECO:0000314"/>
    <property type="project" value="UniProtKB"/>
</dbReference>
<dbReference type="GO" id="GO:0008180">
    <property type="term" value="C:COP9 signalosome"/>
    <property type="evidence" value="ECO:0000314"/>
    <property type="project" value="UniProtKB"/>
</dbReference>
<dbReference type="GO" id="GO:0005737">
    <property type="term" value="C:cytoplasm"/>
    <property type="evidence" value="ECO:0000314"/>
    <property type="project" value="UniProtKB"/>
</dbReference>
<dbReference type="GO" id="GO:0005654">
    <property type="term" value="C:nucleoplasm"/>
    <property type="evidence" value="ECO:0000314"/>
    <property type="project" value="UniProtKB"/>
</dbReference>
<dbReference type="GO" id="GO:0005634">
    <property type="term" value="C:nucleus"/>
    <property type="evidence" value="ECO:0000314"/>
    <property type="project" value="UniProtKB"/>
</dbReference>
<dbReference type="GO" id="GO:0034644">
    <property type="term" value="P:cellular response to UV"/>
    <property type="evidence" value="ECO:0000314"/>
    <property type="project" value="UniProtKB"/>
</dbReference>
<dbReference type="GO" id="GO:2000435">
    <property type="term" value="P:negative regulation of protein neddylation"/>
    <property type="evidence" value="ECO:0000315"/>
    <property type="project" value="UniProtKB"/>
</dbReference>
<dbReference type="GO" id="GO:0008284">
    <property type="term" value="P:positive regulation of cell population proliferation"/>
    <property type="evidence" value="ECO:0000315"/>
    <property type="project" value="UniProtKB"/>
</dbReference>
<dbReference type="InterPro" id="IPR029391">
    <property type="entry name" value="CSN9_metazoa"/>
</dbReference>
<dbReference type="PANTHER" id="PTHR28562">
    <property type="entry name" value="COP9 SIGNALOSOME COMPLEX SUBUNIT 9"/>
    <property type="match status" value="1"/>
</dbReference>
<dbReference type="Pfam" id="PF15004">
    <property type="entry name" value="MYEOV2"/>
    <property type="match status" value="1"/>
</dbReference>
<sequence length="57" mass="6211">MKPAVDEMFPEGAGPYVDLDEAGGSTGLLMDLAANEKAVHADFFNDFEDLFDDDDIQ</sequence>
<comment type="function">
    <molecule>Isoform 1</molecule>
    <text evidence="2">Component of the COP9 signalosome complex (CSN), a complex involved in various cellular and developmental processes. The CSN complex is an essential regulator of the ubiquitin (Ubl) conjugation pathway by mediating the deneddylation of the cullin subunits of SCF-type E3 ligase complexes, leading to decrease the Ubl ligase activity of SCF-type complexes such as SCF, CSA or DDB2. The complex is also involved in phosphorylation of p53/TP53, c-jun/JUN, IkappaBalpha/NFKBIA, ITPK1 and IRF8/ICSBP, possibly via its association with CK2 and PKD kinases. CSN-dependent phosphorylation of TP53 and JUN promotes and protects degradation by the Ubl system, respectively. Plays a role in cell proliferation.</text>
</comment>
<comment type="function">
    <molecule>Isoform 2</molecule>
    <text evidence="1">Negatively regulates neddylation of proteins, including ribosoaml protein RPL11.</text>
</comment>
<comment type="subunit">
    <text evidence="1 2">Component of the CSN complex, composed of COPS1/GPS1, COPS2, COPS3, COPS4, COPS5, COPS6, COPS7 (COPS7A or COPS7B), COPS8 and COPS9 isoform 1. In the complex, it interacts directly with COPS3, COPS5 and COPS6 (PubMed:26456823). Isoform 2 associates with CSN complex (PubMed:23776465). Isoform 2 interacts with COPS5, CUL1, CUL3 and RPL11 (PubMed:23776465). According to PubMed:26456823, does not associate with CSN complex.</text>
</comment>
<comment type="interaction">
    <interactant intactId="EBI-17466401">
        <id>Q8WXC6-1</id>
    </interactant>
    <interactant intactId="EBI-7353612">
        <id>P57075-2</id>
        <label>UBASH3A</label>
    </interactant>
    <organismsDiffer>false</organismsDiffer>
    <experiments>3</experiments>
</comment>
<comment type="subcellular location">
    <molecule>Isoform 1</molecule>
    <subcellularLocation>
        <location evidence="2">Nucleus</location>
    </subcellularLocation>
    <subcellularLocation>
        <location evidence="2">Cytoplasm</location>
    </subcellularLocation>
    <subcellularLocation>
        <location evidence="2">Nucleus</location>
        <location evidence="2">Nucleoplasm</location>
    </subcellularLocation>
    <text evidence="2">Excluded from the nucleolus. Recruited to the nucleoplasm and chromatin following DNA damage induction.</text>
</comment>
<comment type="subcellular location">
    <molecule>Isoform 2</molecule>
    <subcellularLocation>
        <location evidence="1">Nucleus</location>
        <location evidence="1">Nucleoplasm</location>
    </subcellularLocation>
    <text evidence="1">Excluded from the nucleolus.</text>
</comment>
<comment type="alternative products">
    <event type="alternative splicing"/>
    <isoform>
        <id>Q8WXC6-2</id>
        <name>1</name>
        <name evidence="3">CSNAP</name>
        <sequence type="displayed"/>
    </isoform>
    <isoform>
        <id>Q8WXC6-1</id>
        <name>2</name>
        <name evidence="4">MYEOV2-L</name>
        <sequence type="described" ref="VSP_037073 VSP_037074 VSP_037075"/>
    </isoform>
</comment>
<comment type="domain">
    <molecule>Isoform 1</molecule>
    <text evidence="2">The Phe/Asp-rich domain at the C-terminus is necessary for its incorporation into the CSN complex.</text>
</comment>
<comment type="domain">
    <molecule>Isoform 2</molecule>
    <text evidence="1">Amino acids 60-89 in isoform 2 are necessary for interaction with COPS5, CUL1, CUL3.</text>
</comment>
<comment type="similarity">
    <text evidence="5">Belongs to the CSN9 family.</text>
</comment>
<keyword id="KW-0025">Alternative splicing</keyword>
<keyword id="KW-0963">Cytoplasm</keyword>
<keyword id="KW-0539">Nucleus</keyword>
<keyword id="KW-0597">Phosphoprotein</keyword>
<keyword id="KW-1267">Proteomics identification</keyword>
<keyword id="KW-1185">Reference proteome</keyword>
<keyword id="KW-0736">Signalosome</keyword>
<organism>
    <name type="scientific">Homo sapiens</name>
    <name type="common">Human</name>
    <dbReference type="NCBI Taxonomy" id="9606"/>
    <lineage>
        <taxon>Eukaryota</taxon>
        <taxon>Metazoa</taxon>
        <taxon>Chordata</taxon>
        <taxon>Craniata</taxon>
        <taxon>Vertebrata</taxon>
        <taxon>Euteleostomi</taxon>
        <taxon>Mammalia</taxon>
        <taxon>Eutheria</taxon>
        <taxon>Euarchontoglires</taxon>
        <taxon>Primates</taxon>
        <taxon>Haplorrhini</taxon>
        <taxon>Catarrhini</taxon>
        <taxon>Hominidae</taxon>
        <taxon>Homo</taxon>
    </lineage>
</organism>
<gene>
    <name evidence="6" type="primary">COPS9</name>
    <name evidence="4" type="synonym">MYEOV2</name>
</gene>
<protein>
    <recommendedName>
        <fullName evidence="5">COP9 signalosome complex subunit 9</fullName>
    </recommendedName>
    <alternativeName>
        <fullName evidence="3">CSN acidic protein</fullName>
        <shortName evidence="3">CSNAP</shortName>
    </alternativeName>
    <alternativeName>
        <fullName evidence="4">Myeloma-overexpressed gene 2 protein</fullName>
    </alternativeName>
</protein>
<name>CSN9_HUMAN</name>
<accession>Q8WXC6</accession>
<accession>Q8N110</accession>